<reference key="1">
    <citation type="journal article" date="2004" name="Nature">
        <title>Genome evolution in yeasts.</title>
        <authorList>
            <person name="Dujon B."/>
            <person name="Sherman D."/>
            <person name="Fischer G."/>
            <person name="Durrens P."/>
            <person name="Casaregola S."/>
            <person name="Lafontaine I."/>
            <person name="de Montigny J."/>
            <person name="Marck C."/>
            <person name="Neuveglise C."/>
            <person name="Talla E."/>
            <person name="Goffard N."/>
            <person name="Frangeul L."/>
            <person name="Aigle M."/>
            <person name="Anthouard V."/>
            <person name="Babour A."/>
            <person name="Barbe V."/>
            <person name="Barnay S."/>
            <person name="Blanchin S."/>
            <person name="Beckerich J.-M."/>
            <person name="Beyne E."/>
            <person name="Bleykasten C."/>
            <person name="Boisrame A."/>
            <person name="Boyer J."/>
            <person name="Cattolico L."/>
            <person name="Confanioleri F."/>
            <person name="de Daruvar A."/>
            <person name="Despons L."/>
            <person name="Fabre E."/>
            <person name="Fairhead C."/>
            <person name="Ferry-Dumazet H."/>
            <person name="Groppi A."/>
            <person name="Hantraye F."/>
            <person name="Hennequin C."/>
            <person name="Jauniaux N."/>
            <person name="Joyet P."/>
            <person name="Kachouri R."/>
            <person name="Kerrest A."/>
            <person name="Koszul R."/>
            <person name="Lemaire M."/>
            <person name="Lesur I."/>
            <person name="Ma L."/>
            <person name="Muller H."/>
            <person name="Nicaud J.-M."/>
            <person name="Nikolski M."/>
            <person name="Oztas S."/>
            <person name="Ozier-Kalogeropoulos O."/>
            <person name="Pellenz S."/>
            <person name="Potier S."/>
            <person name="Richard G.-F."/>
            <person name="Straub M.-L."/>
            <person name="Suleau A."/>
            <person name="Swennen D."/>
            <person name="Tekaia F."/>
            <person name="Wesolowski-Louvel M."/>
            <person name="Westhof E."/>
            <person name="Wirth B."/>
            <person name="Zeniou-Meyer M."/>
            <person name="Zivanovic Y."/>
            <person name="Bolotin-Fukuhara M."/>
            <person name="Thierry A."/>
            <person name="Bouchier C."/>
            <person name="Caudron B."/>
            <person name="Scarpelli C."/>
            <person name="Gaillardin C."/>
            <person name="Weissenbach J."/>
            <person name="Wincker P."/>
            <person name="Souciet J.-L."/>
        </authorList>
    </citation>
    <scope>NUCLEOTIDE SEQUENCE [LARGE SCALE GENOMIC DNA]</scope>
    <source>
        <strain>ATCC 2001 / BCRC 20586 / JCM 3761 / NBRC 0622 / NRRL Y-65 / CBS 138</strain>
    </source>
</reference>
<gene>
    <name type="primary">EXO84</name>
    <name type="ordered locus">CAGL0K12166g</name>
</gene>
<comment type="function">
    <text evidence="1">Involved in the secretory pathway as part of the exocyst complex which tethers secretory vesicles to the sites of exocytosis. Plays a role in both the assembly of the exocyst and the polarization of this complex to specific sites of the plasma membrane for exocytosis. Also involved in assembly of the spliceosome (By similarity).</text>
</comment>
<comment type="subunit">
    <text evidence="1">Component of the exocyst complex.</text>
</comment>
<comment type="subcellular location">
    <subcellularLocation>
        <location evidence="1">Cytoplasmic vesicle</location>
        <location evidence="1">Secretory vesicle</location>
    </subcellularLocation>
    <text evidence="1">Cell periphery. The polarization of EXO84 requires actin cables (By similarity).</text>
</comment>
<comment type="similarity">
    <text evidence="4">Belongs to the EXO84 family.</text>
</comment>
<feature type="chain" id="PRO_0000118979" description="Exocyst complex component EXO84">
    <location>
        <begin position="1"/>
        <end position="764"/>
    </location>
</feature>
<feature type="region of interest" description="Disordered" evidence="3">
    <location>
        <begin position="1"/>
        <end position="47"/>
    </location>
</feature>
<feature type="region of interest" description="Disordered" evidence="3">
    <location>
        <begin position="94"/>
        <end position="165"/>
    </location>
</feature>
<feature type="region of interest" description="Disordered" evidence="3">
    <location>
        <begin position="287"/>
        <end position="321"/>
    </location>
</feature>
<feature type="region of interest" description="Disordered" evidence="3">
    <location>
        <begin position="479"/>
        <end position="511"/>
    </location>
</feature>
<feature type="coiled-coil region" evidence="2">
    <location>
        <begin position="239"/>
        <end position="272"/>
    </location>
</feature>
<feature type="compositionally biased region" description="Low complexity" evidence="3">
    <location>
        <begin position="16"/>
        <end position="27"/>
    </location>
</feature>
<feature type="compositionally biased region" description="Basic and acidic residues" evidence="3">
    <location>
        <begin position="133"/>
        <end position="148"/>
    </location>
</feature>
<feature type="compositionally biased region" description="Polar residues" evidence="3">
    <location>
        <begin position="289"/>
        <end position="318"/>
    </location>
</feature>
<feature type="cross-link" description="Glycyl lysine isopeptide (Lys-Gly) (interchain with G-Cter in ubiquitin)" evidence="1">
    <location>
        <position position="232"/>
    </location>
</feature>
<organism>
    <name type="scientific">Candida glabrata (strain ATCC 2001 / BCRC 20586 / JCM 3761 / NBRC 0622 / NRRL Y-65 / CBS 138)</name>
    <name type="common">Yeast</name>
    <name type="synonym">Nakaseomyces glabratus</name>
    <dbReference type="NCBI Taxonomy" id="284593"/>
    <lineage>
        <taxon>Eukaryota</taxon>
        <taxon>Fungi</taxon>
        <taxon>Dikarya</taxon>
        <taxon>Ascomycota</taxon>
        <taxon>Saccharomycotina</taxon>
        <taxon>Saccharomycetes</taxon>
        <taxon>Saccharomycetales</taxon>
        <taxon>Saccharomycetaceae</taxon>
        <taxon>Nakaseomyces</taxon>
    </lineage>
</organism>
<protein>
    <recommendedName>
        <fullName>Exocyst complex component EXO84</fullName>
    </recommendedName>
</protein>
<evidence type="ECO:0000250" key="1"/>
<evidence type="ECO:0000255" key="2"/>
<evidence type="ECO:0000256" key="3">
    <source>
        <dbReference type="SAM" id="MobiDB-lite"/>
    </source>
</evidence>
<evidence type="ECO:0000305" key="4"/>
<dbReference type="EMBL" id="CR380957">
    <property type="protein sequence ID" value="CAG61707.1"/>
    <property type="molecule type" value="Genomic_DNA"/>
</dbReference>
<dbReference type="RefSeq" id="XP_448744.1">
    <property type="nucleotide sequence ID" value="XM_448744.1"/>
</dbReference>
<dbReference type="SMR" id="Q6FM00"/>
<dbReference type="FunCoup" id="Q6FM00">
    <property type="interactions" value="200"/>
</dbReference>
<dbReference type="STRING" id="284593.Q6FM00"/>
<dbReference type="EnsemblFungi" id="CAGL0K12166g-T">
    <property type="protein sequence ID" value="CAGL0K12166g-T-p1"/>
    <property type="gene ID" value="CAGL0K12166g"/>
</dbReference>
<dbReference type="KEGG" id="cgr:2889972"/>
<dbReference type="CGD" id="CAL0134525">
    <property type="gene designation" value="CAGL0K12166g"/>
</dbReference>
<dbReference type="VEuPathDB" id="FungiDB:CAGL0K12166g"/>
<dbReference type="eggNOG" id="KOG2215">
    <property type="taxonomic scope" value="Eukaryota"/>
</dbReference>
<dbReference type="HOGENOM" id="CLU_014732_0_0_1"/>
<dbReference type="InParanoid" id="Q6FM00"/>
<dbReference type="OMA" id="AAWLPNR"/>
<dbReference type="Proteomes" id="UP000002428">
    <property type="component" value="Chromosome K"/>
</dbReference>
<dbReference type="GO" id="GO:0005935">
    <property type="term" value="C:cellular bud neck"/>
    <property type="evidence" value="ECO:0007669"/>
    <property type="project" value="EnsemblFungi"/>
</dbReference>
<dbReference type="GO" id="GO:0005934">
    <property type="term" value="C:cellular bud tip"/>
    <property type="evidence" value="ECO:0007669"/>
    <property type="project" value="EnsemblFungi"/>
</dbReference>
<dbReference type="GO" id="GO:0000145">
    <property type="term" value="C:exocyst"/>
    <property type="evidence" value="ECO:0007669"/>
    <property type="project" value="EnsemblFungi"/>
</dbReference>
<dbReference type="GO" id="GO:0000131">
    <property type="term" value="C:incipient cellular bud site"/>
    <property type="evidence" value="ECO:0007669"/>
    <property type="project" value="EnsemblFungi"/>
</dbReference>
<dbReference type="GO" id="GO:0030133">
    <property type="term" value="C:transport vesicle"/>
    <property type="evidence" value="ECO:0007669"/>
    <property type="project" value="UniProtKB-SubCell"/>
</dbReference>
<dbReference type="GO" id="GO:0001927">
    <property type="term" value="P:exocyst assembly"/>
    <property type="evidence" value="ECO:0007669"/>
    <property type="project" value="EnsemblFungi"/>
</dbReference>
<dbReference type="GO" id="GO:0051601">
    <property type="term" value="P:exocyst localization"/>
    <property type="evidence" value="ECO:0007669"/>
    <property type="project" value="EnsemblFungi"/>
</dbReference>
<dbReference type="GO" id="GO:0006893">
    <property type="term" value="P:Golgi to plasma membrane transport"/>
    <property type="evidence" value="ECO:0007669"/>
    <property type="project" value="EnsemblFungi"/>
</dbReference>
<dbReference type="GO" id="GO:0015031">
    <property type="term" value="P:protein transport"/>
    <property type="evidence" value="ECO:0007669"/>
    <property type="project" value="UniProtKB-KW"/>
</dbReference>
<dbReference type="GO" id="GO:0000245">
    <property type="term" value="P:spliceosomal complex assembly"/>
    <property type="evidence" value="ECO:0007669"/>
    <property type="project" value="EnsemblFungi"/>
</dbReference>
<dbReference type="Gene3D" id="1.20.58.1220">
    <property type="entry name" value="Exo84p, C-terminal helical domain"/>
    <property type="match status" value="1"/>
</dbReference>
<dbReference type="Gene3D" id="1.20.58.1210">
    <property type="entry name" value="Exo84p, N-terminal helical domain"/>
    <property type="match status" value="1"/>
</dbReference>
<dbReference type="Gene3D" id="2.30.29.30">
    <property type="entry name" value="Pleckstrin-homology domain (PH domain)/Phosphotyrosine-binding domain (PTB)"/>
    <property type="match status" value="1"/>
</dbReference>
<dbReference type="InterPro" id="IPR016159">
    <property type="entry name" value="Cullin_repeat-like_dom_sf"/>
</dbReference>
<dbReference type="InterPro" id="IPR033961">
    <property type="entry name" value="Exo84"/>
</dbReference>
<dbReference type="InterPro" id="IPR032403">
    <property type="entry name" value="Exo84_C"/>
</dbReference>
<dbReference type="InterPro" id="IPR042561">
    <property type="entry name" value="Exo84_C_1"/>
</dbReference>
<dbReference type="InterPro" id="IPR042560">
    <property type="entry name" value="Exo84_C_2"/>
</dbReference>
<dbReference type="InterPro" id="IPR011993">
    <property type="entry name" value="PH-like_dom_sf"/>
</dbReference>
<dbReference type="PANTHER" id="PTHR21426">
    <property type="entry name" value="EXOCYST COMPLEX COMPONENT 8"/>
    <property type="match status" value="1"/>
</dbReference>
<dbReference type="PANTHER" id="PTHR21426:SF12">
    <property type="entry name" value="EXOCYST COMPLEX COMPONENT 8"/>
    <property type="match status" value="1"/>
</dbReference>
<dbReference type="Pfam" id="PF16528">
    <property type="entry name" value="Exo84_C"/>
    <property type="match status" value="1"/>
</dbReference>
<dbReference type="Pfam" id="PF25345">
    <property type="entry name" value="PH_EXO84"/>
    <property type="match status" value="1"/>
</dbReference>
<dbReference type="Pfam" id="PF08700">
    <property type="entry name" value="VPS51_Exo84_N"/>
    <property type="match status" value="1"/>
</dbReference>
<dbReference type="SUPFAM" id="SSF74788">
    <property type="entry name" value="Cullin repeat-like"/>
    <property type="match status" value="1"/>
</dbReference>
<dbReference type="SUPFAM" id="SSF50729">
    <property type="entry name" value="PH domain-like"/>
    <property type="match status" value="1"/>
</dbReference>
<accession>Q6FM00</accession>
<keyword id="KW-0175">Coiled coil</keyword>
<keyword id="KW-0968">Cytoplasmic vesicle</keyword>
<keyword id="KW-0268">Exocytosis</keyword>
<keyword id="KW-1017">Isopeptide bond</keyword>
<keyword id="KW-0653">Protein transport</keyword>
<keyword id="KW-1185">Reference proteome</keyword>
<keyword id="KW-0813">Transport</keyword>
<keyword id="KW-0832">Ubl conjugation</keyword>
<sequence length="764" mass="86315">MVDFSLRKTRNYWKGSNSSSKQNSEVSLKNAEKKKPVTNPYANLTVPNAANLPTLDAKERNKAASSMQRRLSIHTANYTAPNLDYSMPLPSSNLIDQAMGDEQPTGKVPAINVDDEYGQRNGHSRSATPTDNETSRRPETLRPPELNRKRLGGSGSSAPSGSSRMTMVAPLNPLSPYANLFHPASLRKILSDPQFSAKKFIHERLSEASAVDIDLFTSNLTELSTDVQEEVKRNIYKSYNEIITVNNDLHEASAELKQLRSSISELTKVTDQFVTVAKSRIQMDEQQKMLHTQRPSSPQKTQSSSLLPPVSSDINGTNPKRDRTSVMILEKMWDTQLATLYKNVEGAQKHLGPASNRHLLIESSDWTELNISTQKPLQTVQLYILNDAVLVAGKTKNKQHELIVSQCCPIRDVTISTDREYRTKLMFNFGNSNTCLYETRDINECMRVLDAFRKAKDDLRDITENEKENSKRIKESLVYLQNTQQTPGREGSKSPAKRRSMGLSPSSASRPLSASMDQFILQNLSISVHSRSKSHDWSSLSHKFKLVDNLIEEVDIDLARLKFDSAVNTLLEAESQLATMKDPTKEEDAIILNVLTLKLDQRRDDILTKVTQRNLFINEIAHLREGVKTLIRLGLPEAGLDLLLQNKSNLIQELLLQVGSSEHPSLYLTELAIVRFQIIKRTVIVFRELFHRDHDKLSSILVSWCSHEVEKHFNLVSKQLLNGDKLSPDAIRYSRKQIDDLKTVGLDFVYKLDEFIKNNINKLG</sequence>
<name>EXO84_CANGA</name>
<proteinExistence type="inferred from homology"/>